<evidence type="ECO:0000250" key="1"/>
<evidence type="ECO:0000250" key="2">
    <source>
        <dbReference type="UniProtKB" id="Q99619"/>
    </source>
</evidence>
<evidence type="ECO:0000255" key="3">
    <source>
        <dbReference type="PROSITE-ProRule" id="PRU00194"/>
    </source>
</evidence>
<evidence type="ECO:0000255" key="4">
    <source>
        <dbReference type="PROSITE-ProRule" id="PRU00548"/>
    </source>
</evidence>
<evidence type="ECO:0000256" key="5">
    <source>
        <dbReference type="SAM" id="MobiDB-lite"/>
    </source>
</evidence>
<evidence type="ECO:0000305" key="6"/>
<keyword id="KW-0963">Cytoplasm</keyword>
<keyword id="KW-1185">Reference proteome</keyword>
<keyword id="KW-0833">Ubl conjugation pathway</keyword>
<reference key="1">
    <citation type="journal article" date="2004" name="Genome Res.">
        <title>The status, quality, and expansion of the NIH full-length cDNA project: the Mammalian Gene Collection (MGC).</title>
        <authorList>
            <consortium name="The MGC Project Team"/>
        </authorList>
    </citation>
    <scope>NUCLEOTIDE SEQUENCE [LARGE SCALE MRNA]</scope>
    <source>
        <tissue>Liver</tissue>
    </source>
</reference>
<dbReference type="EMBL" id="BC088189">
    <property type="protein sequence ID" value="AAH88189.1"/>
    <property type="molecule type" value="mRNA"/>
</dbReference>
<dbReference type="RefSeq" id="NP_001009660.1">
    <property type="nucleotide sequence ID" value="NM_001009660.2"/>
</dbReference>
<dbReference type="RefSeq" id="NP_001381285.1">
    <property type="nucleotide sequence ID" value="NM_001394356.1"/>
</dbReference>
<dbReference type="RefSeq" id="NP_001381286.1">
    <property type="nucleotide sequence ID" value="NM_001394357.1"/>
</dbReference>
<dbReference type="RefSeq" id="XP_003750703.1">
    <property type="nucleotide sequence ID" value="XM_003750655.4"/>
</dbReference>
<dbReference type="SMR" id="Q5M877"/>
<dbReference type="FunCoup" id="Q5M877">
    <property type="interactions" value="8"/>
</dbReference>
<dbReference type="STRING" id="10116.ENSRNOP00000020493"/>
<dbReference type="GlyGen" id="Q5M877">
    <property type="glycosylation" value="1 site"/>
</dbReference>
<dbReference type="PhosphoSitePlus" id="Q5M877"/>
<dbReference type="PaxDb" id="10116-ENSRNOP00000020493"/>
<dbReference type="Ensembl" id="ENSRNOT00000020493.6">
    <property type="protein sequence ID" value="ENSRNOP00000020493.4"/>
    <property type="gene ID" value="ENSRNOG00000015125.6"/>
</dbReference>
<dbReference type="GeneID" id="297592"/>
<dbReference type="KEGG" id="rno:297592"/>
<dbReference type="UCSC" id="RGD:1310854">
    <property type="organism name" value="rat"/>
</dbReference>
<dbReference type="AGR" id="RGD:1310854"/>
<dbReference type="CTD" id="84727"/>
<dbReference type="RGD" id="1310854">
    <property type="gene designation" value="Spsb2"/>
</dbReference>
<dbReference type="eggNOG" id="KOG3953">
    <property type="taxonomic scope" value="Eukaryota"/>
</dbReference>
<dbReference type="GeneTree" id="ENSGT01030000234629"/>
<dbReference type="HOGENOM" id="CLU_046756_0_0_1"/>
<dbReference type="InParanoid" id="Q5M877"/>
<dbReference type="OMA" id="HAWEIGW"/>
<dbReference type="PhylomeDB" id="Q5M877"/>
<dbReference type="TreeFam" id="TF312822"/>
<dbReference type="Reactome" id="R-RNO-8951664">
    <property type="pathway name" value="Neddylation"/>
</dbReference>
<dbReference type="Reactome" id="R-RNO-983168">
    <property type="pathway name" value="Antigen processing: Ubiquitination &amp; Proteasome degradation"/>
</dbReference>
<dbReference type="UniPathway" id="UPA00143"/>
<dbReference type="PRO" id="PR:Q5M877"/>
<dbReference type="Proteomes" id="UP000002494">
    <property type="component" value="Chromosome 4"/>
</dbReference>
<dbReference type="Bgee" id="ENSRNOG00000015125">
    <property type="expression patterns" value="Expressed in jejunum and 18 other cell types or tissues"/>
</dbReference>
<dbReference type="GO" id="GO:0005829">
    <property type="term" value="C:cytosol"/>
    <property type="evidence" value="ECO:0000250"/>
    <property type="project" value="UniProtKB"/>
</dbReference>
<dbReference type="GO" id="GO:0019005">
    <property type="term" value="C:SCF ubiquitin ligase complex"/>
    <property type="evidence" value="ECO:0000318"/>
    <property type="project" value="GO_Central"/>
</dbReference>
<dbReference type="GO" id="GO:1990756">
    <property type="term" value="F:ubiquitin-like ligase-substrate adaptor activity"/>
    <property type="evidence" value="ECO:0000250"/>
    <property type="project" value="UniProtKB"/>
</dbReference>
<dbReference type="GO" id="GO:0035556">
    <property type="term" value="P:intracellular signal transduction"/>
    <property type="evidence" value="ECO:0007669"/>
    <property type="project" value="InterPro"/>
</dbReference>
<dbReference type="GO" id="GO:0043161">
    <property type="term" value="P:proteasome-mediated ubiquitin-dependent protein catabolic process"/>
    <property type="evidence" value="ECO:0000318"/>
    <property type="project" value="GO_Central"/>
</dbReference>
<dbReference type="GO" id="GO:0016567">
    <property type="term" value="P:protein ubiquitination"/>
    <property type="evidence" value="ECO:0000250"/>
    <property type="project" value="UniProtKB"/>
</dbReference>
<dbReference type="GO" id="GO:0006511">
    <property type="term" value="P:ubiquitin-dependent protein catabolic process"/>
    <property type="evidence" value="ECO:0000250"/>
    <property type="project" value="UniProtKB"/>
</dbReference>
<dbReference type="CDD" id="cd03719">
    <property type="entry name" value="SOCS_SSB2"/>
    <property type="match status" value="1"/>
</dbReference>
<dbReference type="CDD" id="cd12906">
    <property type="entry name" value="SPRY_SOCS1-2-4"/>
    <property type="match status" value="1"/>
</dbReference>
<dbReference type="FunFam" id="1.10.750.20:FF:000001">
    <property type="entry name" value="Ankyrin repeat and SOCS box containing 1"/>
    <property type="match status" value="1"/>
</dbReference>
<dbReference type="FunFam" id="2.60.120.920:FF:000048">
    <property type="entry name" value="SPRY domain-containing SOCS box protein 2"/>
    <property type="match status" value="1"/>
</dbReference>
<dbReference type="Gene3D" id="2.60.120.920">
    <property type="match status" value="1"/>
</dbReference>
<dbReference type="Gene3D" id="1.10.750.20">
    <property type="entry name" value="SOCS box"/>
    <property type="match status" value="1"/>
</dbReference>
<dbReference type="InterPro" id="IPR001870">
    <property type="entry name" value="B30.2/SPRY"/>
</dbReference>
<dbReference type="InterPro" id="IPR043136">
    <property type="entry name" value="B30.2/SPRY_sf"/>
</dbReference>
<dbReference type="InterPro" id="IPR013320">
    <property type="entry name" value="ConA-like_dom_sf"/>
</dbReference>
<dbReference type="InterPro" id="IPR050672">
    <property type="entry name" value="FBXO45-Fsn/SPSB_families"/>
</dbReference>
<dbReference type="InterPro" id="IPR001496">
    <property type="entry name" value="SOCS_box"/>
</dbReference>
<dbReference type="InterPro" id="IPR036036">
    <property type="entry name" value="SOCS_box-like_dom_sf"/>
</dbReference>
<dbReference type="InterPro" id="IPR003877">
    <property type="entry name" value="SPRY_dom"/>
</dbReference>
<dbReference type="InterPro" id="IPR037340">
    <property type="entry name" value="SSB2_SOCS"/>
</dbReference>
<dbReference type="PANTHER" id="PTHR12245">
    <property type="entry name" value="SPRY DOMAIN CONTAINING SOCS BOX PROTEIN"/>
    <property type="match status" value="1"/>
</dbReference>
<dbReference type="PANTHER" id="PTHR12245:SF2">
    <property type="entry name" value="SPRY DOMAIN-CONTAINING SOCS BOX PROTEIN 2"/>
    <property type="match status" value="1"/>
</dbReference>
<dbReference type="Pfam" id="PF07525">
    <property type="entry name" value="SOCS_box"/>
    <property type="match status" value="1"/>
</dbReference>
<dbReference type="Pfam" id="PF00622">
    <property type="entry name" value="SPRY"/>
    <property type="match status" value="1"/>
</dbReference>
<dbReference type="SMART" id="SM00253">
    <property type="entry name" value="SOCS"/>
    <property type="match status" value="1"/>
</dbReference>
<dbReference type="SMART" id="SM00969">
    <property type="entry name" value="SOCS_box"/>
    <property type="match status" value="1"/>
</dbReference>
<dbReference type="SMART" id="SM00449">
    <property type="entry name" value="SPRY"/>
    <property type="match status" value="1"/>
</dbReference>
<dbReference type="SUPFAM" id="SSF49899">
    <property type="entry name" value="Concanavalin A-like lectins/glucanases"/>
    <property type="match status" value="1"/>
</dbReference>
<dbReference type="SUPFAM" id="SSF158235">
    <property type="entry name" value="SOCS box-like"/>
    <property type="match status" value="1"/>
</dbReference>
<dbReference type="PROSITE" id="PS50188">
    <property type="entry name" value="B302_SPRY"/>
    <property type="match status" value="1"/>
</dbReference>
<dbReference type="PROSITE" id="PS50225">
    <property type="entry name" value="SOCS"/>
    <property type="match status" value="1"/>
</dbReference>
<sequence length="264" mass="28797">MGQTALARGSSSTPSSHALYSDLSPPEGLEELLSAPPPDLGAQRHHGWNPKDCSENIDVKEGGLCFERRPVAQSTDGVRGKRGYSRGLHAWEISWPLEQRGTHAVVGVATALAPLQADHYAALLGSNSESWGWDIGRGKLYHQSKGLEAPQYPAGPQGEQLVVPERLLVVLDMEEGTLGYSIGGTYLGPAFRGLKGRTLYPSVSAVWGQCQVRIRYLGERRAEEPQSLLHLSRLCVRHALGDTRLGQISSLPLPPAMKRYLLYK</sequence>
<accession>Q5M877</accession>
<feature type="chain" id="PRO_0000238476" description="SPRY domain-containing SOCS box protein 2">
    <location>
        <begin position="1"/>
        <end position="264"/>
    </location>
</feature>
<feature type="domain" description="B30.2/SPRY" evidence="4">
    <location>
        <begin position="26"/>
        <end position="221"/>
    </location>
</feature>
<feature type="domain" description="SOCS box" evidence="3">
    <location>
        <begin position="222"/>
        <end position="264"/>
    </location>
</feature>
<feature type="region of interest" description="Disordered" evidence="5">
    <location>
        <begin position="1"/>
        <end position="53"/>
    </location>
</feature>
<feature type="compositionally biased region" description="Polar residues" evidence="5">
    <location>
        <begin position="1"/>
        <end position="18"/>
    </location>
</feature>
<feature type="compositionally biased region" description="Low complexity" evidence="5">
    <location>
        <begin position="21"/>
        <end position="34"/>
    </location>
</feature>
<proteinExistence type="evidence at transcript level"/>
<name>SPSB2_RAT</name>
<gene>
    <name type="primary">Spsb2</name>
    <name type="synonym">Ssb2</name>
</gene>
<organism>
    <name type="scientific">Rattus norvegicus</name>
    <name type="common">Rat</name>
    <dbReference type="NCBI Taxonomy" id="10116"/>
    <lineage>
        <taxon>Eukaryota</taxon>
        <taxon>Metazoa</taxon>
        <taxon>Chordata</taxon>
        <taxon>Craniata</taxon>
        <taxon>Vertebrata</taxon>
        <taxon>Euteleostomi</taxon>
        <taxon>Mammalia</taxon>
        <taxon>Eutheria</taxon>
        <taxon>Euarchontoglires</taxon>
        <taxon>Glires</taxon>
        <taxon>Rodentia</taxon>
        <taxon>Myomorpha</taxon>
        <taxon>Muroidea</taxon>
        <taxon>Muridae</taxon>
        <taxon>Murinae</taxon>
        <taxon>Rattus</taxon>
    </lineage>
</organism>
<comment type="function">
    <text evidence="2">Substrate recognition component of a SCF-like ECS (Elongin BC-CUL2/5-SOCS-box protein) E3 ubiquitin-protein ligase complex which mediates the ubiquitination and subsequent proteasomal degradation of target proteins (By similarity). Negatively regulates nitric oxide (NO) production and limits cellular toxicity in activated macrophages by mediating the ubiquitination and proteasomal degradation of NOS2 (By similarity). Acts as a bridge which links NOS2 with the ECS E3 ubiquitin ligase complex components ELOC and CUL5 (By similarity).</text>
</comment>
<comment type="pathway">
    <text>Protein modification; protein ubiquitination.</text>
</comment>
<comment type="subunit">
    <text evidence="2">Component of the probable ECS(SPSB2) E3 ubiquitin-protein ligase complex which contains CUL5, RNF7/RBX2, Elongin BC complex and SPSB2 (By similarity). Interacts with CUL5, RNF7, ELOB and ELOC (By similarity). Interacts with MET (By similarity). Interacts (via B30.2/SPRY domain) with PAWR; this interaction occurs in association with the Elongin BC complex (By similarity). Interacts with NOS2 (By similarity).</text>
</comment>
<comment type="subcellular location">
    <subcellularLocation>
        <location evidence="6">Cytoplasm</location>
    </subcellularLocation>
    <subcellularLocation>
        <location evidence="2">Cytoplasm</location>
        <location evidence="2">Cytosol</location>
    </subcellularLocation>
    <text evidence="2">Exhibits a diffuse cytosolic localization.</text>
</comment>
<comment type="domain">
    <text evidence="1 2">The SOCS box domain mediates the interaction with the Elongin BC complex, an adapter module in different E3 ubiquitin ligase complexes (By similarity). Essential for its ability to link NOS2 and the ECS E3 ubiquitin ligase complex components ELOC and CUL5 (By similarity).</text>
</comment>
<comment type="similarity">
    <text evidence="6">Belongs to the SPSB family.</text>
</comment>
<protein>
    <recommendedName>
        <fullName>SPRY domain-containing SOCS box protein 2</fullName>
        <shortName>SSB-2</shortName>
    </recommendedName>
</protein>